<keyword id="KW-0030">Aminoacyl-tRNA synthetase</keyword>
<keyword id="KW-0067">ATP-binding</keyword>
<keyword id="KW-0963">Cytoplasm</keyword>
<keyword id="KW-0436">Ligase</keyword>
<keyword id="KW-0547">Nucleotide-binding</keyword>
<keyword id="KW-0648">Protein biosynthesis</keyword>
<accession>B7JJ97</accession>
<dbReference type="EC" id="6.1.1.15" evidence="1"/>
<dbReference type="EMBL" id="CP001283">
    <property type="protein sequence ID" value="ACK88107.1"/>
    <property type="molecule type" value="Genomic_DNA"/>
</dbReference>
<dbReference type="RefSeq" id="WP_000814312.1">
    <property type="nucleotide sequence ID" value="NC_011773.1"/>
</dbReference>
<dbReference type="SMR" id="B7JJ97"/>
<dbReference type="KEGG" id="bcu:BCAH820_3831"/>
<dbReference type="HOGENOM" id="CLU_016739_0_0_9"/>
<dbReference type="Proteomes" id="UP000001363">
    <property type="component" value="Chromosome"/>
</dbReference>
<dbReference type="GO" id="GO:0005829">
    <property type="term" value="C:cytosol"/>
    <property type="evidence" value="ECO:0007669"/>
    <property type="project" value="TreeGrafter"/>
</dbReference>
<dbReference type="GO" id="GO:0002161">
    <property type="term" value="F:aminoacyl-tRNA deacylase activity"/>
    <property type="evidence" value="ECO:0007669"/>
    <property type="project" value="InterPro"/>
</dbReference>
<dbReference type="GO" id="GO:0005524">
    <property type="term" value="F:ATP binding"/>
    <property type="evidence" value="ECO:0007669"/>
    <property type="project" value="UniProtKB-UniRule"/>
</dbReference>
<dbReference type="GO" id="GO:0140096">
    <property type="term" value="F:catalytic activity, acting on a protein"/>
    <property type="evidence" value="ECO:0007669"/>
    <property type="project" value="UniProtKB-ARBA"/>
</dbReference>
<dbReference type="GO" id="GO:0004827">
    <property type="term" value="F:proline-tRNA ligase activity"/>
    <property type="evidence" value="ECO:0007669"/>
    <property type="project" value="UniProtKB-UniRule"/>
</dbReference>
<dbReference type="GO" id="GO:0016740">
    <property type="term" value="F:transferase activity"/>
    <property type="evidence" value="ECO:0007669"/>
    <property type="project" value="UniProtKB-ARBA"/>
</dbReference>
<dbReference type="GO" id="GO:0006433">
    <property type="term" value="P:prolyl-tRNA aminoacylation"/>
    <property type="evidence" value="ECO:0007669"/>
    <property type="project" value="UniProtKB-UniRule"/>
</dbReference>
<dbReference type="CDD" id="cd04334">
    <property type="entry name" value="ProRS-INS"/>
    <property type="match status" value="1"/>
</dbReference>
<dbReference type="CDD" id="cd00861">
    <property type="entry name" value="ProRS_anticodon_short"/>
    <property type="match status" value="1"/>
</dbReference>
<dbReference type="CDD" id="cd00779">
    <property type="entry name" value="ProRS_core_prok"/>
    <property type="match status" value="1"/>
</dbReference>
<dbReference type="FunFam" id="3.30.930.10:FF:000043">
    <property type="entry name" value="Proline--tRNA ligase"/>
    <property type="match status" value="1"/>
</dbReference>
<dbReference type="FunFam" id="3.30.930.10:FF:000065">
    <property type="entry name" value="Proline--tRNA ligase"/>
    <property type="match status" value="1"/>
</dbReference>
<dbReference type="FunFam" id="3.40.50.800:FF:000011">
    <property type="entry name" value="Proline--tRNA ligase"/>
    <property type="match status" value="1"/>
</dbReference>
<dbReference type="Gene3D" id="3.40.50.800">
    <property type="entry name" value="Anticodon-binding domain"/>
    <property type="match status" value="1"/>
</dbReference>
<dbReference type="Gene3D" id="3.30.930.10">
    <property type="entry name" value="Bira Bifunctional Protein, Domain 2"/>
    <property type="match status" value="2"/>
</dbReference>
<dbReference type="HAMAP" id="MF_01569">
    <property type="entry name" value="Pro_tRNA_synth_type1"/>
    <property type="match status" value="1"/>
</dbReference>
<dbReference type="InterPro" id="IPR002314">
    <property type="entry name" value="aa-tRNA-synt_IIb"/>
</dbReference>
<dbReference type="InterPro" id="IPR006195">
    <property type="entry name" value="aa-tRNA-synth_II"/>
</dbReference>
<dbReference type="InterPro" id="IPR045864">
    <property type="entry name" value="aa-tRNA-synth_II/BPL/LPL"/>
</dbReference>
<dbReference type="InterPro" id="IPR004154">
    <property type="entry name" value="Anticodon-bd"/>
</dbReference>
<dbReference type="InterPro" id="IPR036621">
    <property type="entry name" value="Anticodon-bd_dom_sf"/>
</dbReference>
<dbReference type="InterPro" id="IPR002316">
    <property type="entry name" value="Pro-tRNA-ligase_IIa"/>
</dbReference>
<dbReference type="InterPro" id="IPR004500">
    <property type="entry name" value="Pro-tRNA-synth_IIa_bac-type"/>
</dbReference>
<dbReference type="InterPro" id="IPR023717">
    <property type="entry name" value="Pro-tRNA-Synthase_IIa_type1"/>
</dbReference>
<dbReference type="InterPro" id="IPR050062">
    <property type="entry name" value="Pro-tRNA_synthetase"/>
</dbReference>
<dbReference type="InterPro" id="IPR044140">
    <property type="entry name" value="ProRS_anticodon_short"/>
</dbReference>
<dbReference type="InterPro" id="IPR033730">
    <property type="entry name" value="ProRS_core_prok"/>
</dbReference>
<dbReference type="InterPro" id="IPR036754">
    <property type="entry name" value="YbaK/aa-tRNA-synt-asso_dom_sf"/>
</dbReference>
<dbReference type="InterPro" id="IPR007214">
    <property type="entry name" value="YbaK/aa-tRNA-synth-assoc-dom"/>
</dbReference>
<dbReference type="NCBIfam" id="NF006625">
    <property type="entry name" value="PRK09194.1"/>
    <property type="match status" value="1"/>
</dbReference>
<dbReference type="NCBIfam" id="TIGR00409">
    <property type="entry name" value="proS_fam_II"/>
    <property type="match status" value="1"/>
</dbReference>
<dbReference type="PANTHER" id="PTHR42753">
    <property type="entry name" value="MITOCHONDRIAL RIBOSOME PROTEIN L39/PROLYL-TRNA LIGASE FAMILY MEMBER"/>
    <property type="match status" value="1"/>
</dbReference>
<dbReference type="PANTHER" id="PTHR42753:SF2">
    <property type="entry name" value="PROLINE--TRNA LIGASE"/>
    <property type="match status" value="1"/>
</dbReference>
<dbReference type="Pfam" id="PF03129">
    <property type="entry name" value="HGTP_anticodon"/>
    <property type="match status" value="1"/>
</dbReference>
<dbReference type="Pfam" id="PF00587">
    <property type="entry name" value="tRNA-synt_2b"/>
    <property type="match status" value="1"/>
</dbReference>
<dbReference type="Pfam" id="PF04073">
    <property type="entry name" value="tRNA_edit"/>
    <property type="match status" value="1"/>
</dbReference>
<dbReference type="PIRSF" id="PIRSF001535">
    <property type="entry name" value="ProRS_1"/>
    <property type="match status" value="1"/>
</dbReference>
<dbReference type="PRINTS" id="PR01046">
    <property type="entry name" value="TRNASYNTHPRO"/>
</dbReference>
<dbReference type="SUPFAM" id="SSF52954">
    <property type="entry name" value="Class II aaRS ABD-related"/>
    <property type="match status" value="1"/>
</dbReference>
<dbReference type="SUPFAM" id="SSF55681">
    <property type="entry name" value="Class II aaRS and biotin synthetases"/>
    <property type="match status" value="1"/>
</dbReference>
<dbReference type="SUPFAM" id="SSF55826">
    <property type="entry name" value="YbaK/ProRS associated domain"/>
    <property type="match status" value="1"/>
</dbReference>
<dbReference type="PROSITE" id="PS50862">
    <property type="entry name" value="AA_TRNA_LIGASE_II"/>
    <property type="match status" value="1"/>
</dbReference>
<reference key="1">
    <citation type="submission" date="2008-10" db="EMBL/GenBank/DDBJ databases">
        <title>Genome sequence of Bacillus cereus AH820.</title>
        <authorList>
            <person name="Dodson R.J."/>
            <person name="Durkin A.S."/>
            <person name="Rosovitz M.J."/>
            <person name="Rasko D.A."/>
            <person name="Hoffmaster A."/>
            <person name="Ravel J."/>
            <person name="Sutton G."/>
        </authorList>
    </citation>
    <scope>NUCLEOTIDE SEQUENCE [LARGE SCALE GENOMIC DNA]</scope>
    <source>
        <strain>AH820</strain>
    </source>
</reference>
<feature type="chain" id="PRO_1000199352" description="Proline--tRNA ligase">
    <location>
        <begin position="1"/>
        <end position="566"/>
    </location>
</feature>
<name>SYP_BACC0</name>
<organism>
    <name type="scientific">Bacillus cereus (strain AH820)</name>
    <dbReference type="NCBI Taxonomy" id="405535"/>
    <lineage>
        <taxon>Bacteria</taxon>
        <taxon>Bacillati</taxon>
        <taxon>Bacillota</taxon>
        <taxon>Bacilli</taxon>
        <taxon>Bacillales</taxon>
        <taxon>Bacillaceae</taxon>
        <taxon>Bacillus</taxon>
        <taxon>Bacillus cereus group</taxon>
    </lineage>
</organism>
<protein>
    <recommendedName>
        <fullName evidence="1">Proline--tRNA ligase</fullName>
        <ecNumber evidence="1">6.1.1.15</ecNumber>
    </recommendedName>
    <alternativeName>
        <fullName evidence="1">Prolyl-tRNA synthetase</fullName>
        <shortName evidence="1">ProRS</shortName>
    </alternativeName>
</protein>
<proteinExistence type="inferred from homology"/>
<evidence type="ECO:0000255" key="1">
    <source>
        <dbReference type="HAMAP-Rule" id="MF_01569"/>
    </source>
</evidence>
<sequence length="566" mass="63179">MKQSMVFSPTLREVPADAEIKSHQLLLRAGFMRQNASGIYSFLPFGLKVLHKVERIVREEMERAGAVELLMPAMQAAELWQESGRWYSYGSELMRMKDRNAREFALGATHEEVITDLVRDEVKSYKKLPLTLYQIQTKFRDEQRPRFGLLRGREFLMKDAYSFHATQESLDEVYDRLYKAYSNIFARCGLNFRAVIADSGAMGGKDTHEFMVLSDVGEDTIAYSDTSDYAANIEMAPVVATYTKSDEAEKELEKVATPDQKAIEEVSAFLNIEADKCIKSMVFKVDEKLVVVLVRGDHEVNDVKVKNVYGASVVELASHEEVKELLNCEVGSLGPIGVNGDIEIIADHAVASIVNGCSGANEEGFHYVNVNPERDFKVSQYTDLRFIQEGDQSPDGNGTILFARGIEVGHVFKLGTRYSEAMNATFLDENGKTQPLIMGCYGIGVSRTVAAIAEQFNDENGLVWPKAVAPFHVHVIPVNMKSDAQREMGENIYNSLQEQGYEVLLDDRAERAGVKFADADLFGLPVRVTVGKKADEGIVEVKVRATGESEEVKVEELQTYIANILK</sequence>
<gene>
    <name evidence="1" type="primary">proS</name>
    <name type="ordered locus">BCAH820_3831</name>
</gene>
<comment type="function">
    <text evidence="1">Catalyzes the attachment of proline to tRNA(Pro) in a two-step reaction: proline is first activated by ATP to form Pro-AMP and then transferred to the acceptor end of tRNA(Pro). As ProRS can inadvertently accommodate and process non-cognate amino acids such as alanine and cysteine, to avoid such errors it has two additional distinct editing activities against alanine. One activity is designated as 'pretransfer' editing and involves the tRNA(Pro)-independent hydrolysis of activated Ala-AMP. The other activity is designated 'posttransfer' editing and involves deacylation of mischarged Ala-tRNA(Pro). The misacylated Cys-tRNA(Pro) is not edited by ProRS.</text>
</comment>
<comment type="catalytic activity">
    <reaction evidence="1">
        <text>tRNA(Pro) + L-proline + ATP = L-prolyl-tRNA(Pro) + AMP + diphosphate</text>
        <dbReference type="Rhea" id="RHEA:14305"/>
        <dbReference type="Rhea" id="RHEA-COMP:9700"/>
        <dbReference type="Rhea" id="RHEA-COMP:9702"/>
        <dbReference type="ChEBI" id="CHEBI:30616"/>
        <dbReference type="ChEBI" id="CHEBI:33019"/>
        <dbReference type="ChEBI" id="CHEBI:60039"/>
        <dbReference type="ChEBI" id="CHEBI:78442"/>
        <dbReference type="ChEBI" id="CHEBI:78532"/>
        <dbReference type="ChEBI" id="CHEBI:456215"/>
        <dbReference type="EC" id="6.1.1.15"/>
    </reaction>
</comment>
<comment type="subunit">
    <text evidence="1">Homodimer.</text>
</comment>
<comment type="subcellular location">
    <subcellularLocation>
        <location evidence="1">Cytoplasm</location>
    </subcellularLocation>
</comment>
<comment type="domain">
    <text evidence="1">Consists of three domains: the N-terminal catalytic domain, the editing domain and the C-terminal anticodon-binding domain.</text>
</comment>
<comment type="similarity">
    <text evidence="1">Belongs to the class-II aminoacyl-tRNA synthetase family. ProS type 1 subfamily.</text>
</comment>